<reference key="1">
    <citation type="journal article" date="1998" name="Nature">
        <title>Deciphering the biology of Mycobacterium tuberculosis from the complete genome sequence.</title>
        <authorList>
            <person name="Cole S.T."/>
            <person name="Brosch R."/>
            <person name="Parkhill J."/>
            <person name="Garnier T."/>
            <person name="Churcher C.M."/>
            <person name="Harris D.E."/>
            <person name="Gordon S.V."/>
            <person name="Eiglmeier K."/>
            <person name="Gas S."/>
            <person name="Barry C.E. III"/>
            <person name="Tekaia F."/>
            <person name="Badcock K."/>
            <person name="Basham D."/>
            <person name="Brown D."/>
            <person name="Chillingworth T."/>
            <person name="Connor R."/>
            <person name="Davies R.M."/>
            <person name="Devlin K."/>
            <person name="Feltwell T."/>
            <person name="Gentles S."/>
            <person name="Hamlin N."/>
            <person name="Holroyd S."/>
            <person name="Hornsby T."/>
            <person name="Jagels K."/>
            <person name="Krogh A."/>
            <person name="McLean J."/>
            <person name="Moule S."/>
            <person name="Murphy L.D."/>
            <person name="Oliver S."/>
            <person name="Osborne J."/>
            <person name="Quail M.A."/>
            <person name="Rajandream M.A."/>
            <person name="Rogers J."/>
            <person name="Rutter S."/>
            <person name="Seeger K."/>
            <person name="Skelton S."/>
            <person name="Squares S."/>
            <person name="Squares R."/>
            <person name="Sulston J.E."/>
            <person name="Taylor K."/>
            <person name="Whitehead S."/>
            <person name="Barrell B.G."/>
        </authorList>
    </citation>
    <scope>NUCLEOTIDE SEQUENCE [LARGE SCALE GENOMIC DNA]</scope>
    <source>
        <strain>ATCC 25618 / H37Rv</strain>
    </source>
</reference>
<reference key="2">
    <citation type="journal article" date="2011" name="Mol. Cell. Proteomics">
        <title>Proteogenomic analysis of Mycobacterium tuberculosis by high resolution mass spectrometry.</title>
        <authorList>
            <person name="Kelkar D.S."/>
            <person name="Kumar D."/>
            <person name="Kumar P."/>
            <person name="Balakrishnan L."/>
            <person name="Muthusamy B."/>
            <person name="Yadav A.K."/>
            <person name="Shrivastava P."/>
            <person name="Marimuthu A."/>
            <person name="Anand S."/>
            <person name="Sundaram H."/>
            <person name="Kingsbury R."/>
            <person name="Harsha H.C."/>
            <person name="Nair B."/>
            <person name="Prasad T.S."/>
            <person name="Chauhan D.S."/>
            <person name="Katoch K."/>
            <person name="Katoch V.M."/>
            <person name="Kumar P."/>
            <person name="Chaerkady R."/>
            <person name="Ramachandran S."/>
            <person name="Dash D."/>
            <person name="Pandey A."/>
        </authorList>
    </citation>
    <scope>IDENTIFICATION BY MASS SPECTROMETRY [LARGE SCALE ANALYSIS]</scope>
    <source>
        <strain>ATCC 25618 / H37Rv</strain>
    </source>
</reference>
<accession>P9WK13</accession>
<accession>L0T626</accession>
<accession>O54592</accession>
<accession>P0A5J6</accession>
<dbReference type="EC" id="1.1.1.37" evidence="1"/>
<dbReference type="EMBL" id="AL123456">
    <property type="protein sequence ID" value="CCP43996.1"/>
    <property type="molecule type" value="Genomic_DNA"/>
</dbReference>
<dbReference type="PIR" id="G70952">
    <property type="entry name" value="G70952"/>
</dbReference>
<dbReference type="RefSeq" id="NP_215756.1">
    <property type="nucleotide sequence ID" value="NC_000962.3"/>
</dbReference>
<dbReference type="RefSeq" id="WP_003406301.1">
    <property type="nucleotide sequence ID" value="NZ_NVQJ01000039.1"/>
</dbReference>
<dbReference type="PDB" id="4TVO">
    <property type="method" value="X-ray"/>
    <property type="resolution" value="1.50 A"/>
    <property type="chains" value="A/B=2-329"/>
</dbReference>
<dbReference type="PDB" id="5KVV">
    <property type="method" value="X-ray"/>
    <property type="resolution" value="2.01 A"/>
    <property type="chains" value="A/B=2-329"/>
</dbReference>
<dbReference type="PDBsum" id="4TVO"/>
<dbReference type="PDBsum" id="5KVV"/>
<dbReference type="SMR" id="P9WK13"/>
<dbReference type="FunCoup" id="P9WK13">
    <property type="interactions" value="409"/>
</dbReference>
<dbReference type="STRING" id="83332.Rv1240"/>
<dbReference type="PaxDb" id="83332-Rv1240"/>
<dbReference type="DNASU" id="887119"/>
<dbReference type="GeneID" id="887119"/>
<dbReference type="KEGG" id="mtu:Rv1240"/>
<dbReference type="KEGG" id="mtv:RVBD_1240"/>
<dbReference type="TubercuList" id="Rv1240"/>
<dbReference type="eggNOG" id="COG0039">
    <property type="taxonomic scope" value="Bacteria"/>
</dbReference>
<dbReference type="InParanoid" id="P9WK13"/>
<dbReference type="OrthoDB" id="9802969at2"/>
<dbReference type="PhylomeDB" id="P9WK13"/>
<dbReference type="BioCyc" id="MetaCyc:G185E-5411-MONOMER"/>
<dbReference type="BRENDA" id="1.1.1.37">
    <property type="organism ID" value="3445"/>
</dbReference>
<dbReference type="SABIO-RK" id="P9WK13"/>
<dbReference type="EvolutionaryTrace" id="P9WK13"/>
<dbReference type="Proteomes" id="UP000001584">
    <property type="component" value="Chromosome"/>
</dbReference>
<dbReference type="GO" id="GO:0005829">
    <property type="term" value="C:cytosol"/>
    <property type="evidence" value="ECO:0007005"/>
    <property type="project" value="MTBBASE"/>
</dbReference>
<dbReference type="GO" id="GO:0009274">
    <property type="term" value="C:peptidoglycan-based cell wall"/>
    <property type="evidence" value="ECO:0007005"/>
    <property type="project" value="MTBBASE"/>
</dbReference>
<dbReference type="GO" id="GO:0005886">
    <property type="term" value="C:plasma membrane"/>
    <property type="evidence" value="ECO:0007005"/>
    <property type="project" value="MTBBASE"/>
</dbReference>
<dbReference type="GO" id="GO:0030060">
    <property type="term" value="F:L-malate dehydrogenase (NAD+) activity"/>
    <property type="evidence" value="ECO:0000314"/>
    <property type="project" value="MTBBASE"/>
</dbReference>
<dbReference type="GO" id="GO:0005975">
    <property type="term" value="P:carbohydrate metabolic process"/>
    <property type="evidence" value="ECO:0000314"/>
    <property type="project" value="MTBBASE"/>
</dbReference>
<dbReference type="GO" id="GO:0006108">
    <property type="term" value="P:malate metabolic process"/>
    <property type="evidence" value="ECO:0000318"/>
    <property type="project" value="GO_Central"/>
</dbReference>
<dbReference type="GO" id="GO:0006734">
    <property type="term" value="P:NADH metabolic process"/>
    <property type="evidence" value="ECO:0000318"/>
    <property type="project" value="GO_Central"/>
</dbReference>
<dbReference type="GO" id="GO:0006107">
    <property type="term" value="P:oxaloacetate metabolic process"/>
    <property type="evidence" value="ECO:0000318"/>
    <property type="project" value="GO_Central"/>
</dbReference>
<dbReference type="GO" id="GO:0006099">
    <property type="term" value="P:tricarboxylic acid cycle"/>
    <property type="evidence" value="ECO:0000314"/>
    <property type="project" value="MTBBASE"/>
</dbReference>
<dbReference type="CDD" id="cd01338">
    <property type="entry name" value="MDH_chloroplast-like"/>
    <property type="match status" value="1"/>
</dbReference>
<dbReference type="FunFam" id="3.40.50.720:FF:000010">
    <property type="entry name" value="Malate dehydrogenase"/>
    <property type="match status" value="1"/>
</dbReference>
<dbReference type="FunFam" id="3.90.110.10:FF:000002">
    <property type="entry name" value="Malate dehydrogenase"/>
    <property type="match status" value="1"/>
</dbReference>
<dbReference type="Gene3D" id="3.90.110.10">
    <property type="entry name" value="Lactate dehydrogenase/glycoside hydrolase, family 4, C-terminal"/>
    <property type="match status" value="1"/>
</dbReference>
<dbReference type="Gene3D" id="3.40.50.720">
    <property type="entry name" value="NAD(P)-binding Rossmann-like Domain"/>
    <property type="match status" value="1"/>
</dbReference>
<dbReference type="HAMAP" id="MF_01517">
    <property type="entry name" value="Malate_dehydrog_2"/>
    <property type="match status" value="1"/>
</dbReference>
<dbReference type="InterPro" id="IPR001557">
    <property type="entry name" value="L-lactate/malate_DH"/>
</dbReference>
<dbReference type="InterPro" id="IPR022383">
    <property type="entry name" value="Lactate/malate_DH_C"/>
</dbReference>
<dbReference type="InterPro" id="IPR001236">
    <property type="entry name" value="Lactate/malate_DH_N"/>
</dbReference>
<dbReference type="InterPro" id="IPR015955">
    <property type="entry name" value="Lactate_DH/Glyco_Ohase_4_C"/>
</dbReference>
<dbReference type="InterPro" id="IPR001252">
    <property type="entry name" value="Malate_DH_AS"/>
</dbReference>
<dbReference type="InterPro" id="IPR010945">
    <property type="entry name" value="Malate_DH_type2"/>
</dbReference>
<dbReference type="InterPro" id="IPR036291">
    <property type="entry name" value="NAD(P)-bd_dom_sf"/>
</dbReference>
<dbReference type="NCBIfam" id="TIGR01759">
    <property type="entry name" value="MalateDH-SF1"/>
    <property type="match status" value="1"/>
</dbReference>
<dbReference type="NCBIfam" id="NF003916">
    <property type="entry name" value="PRK05442.1"/>
    <property type="match status" value="1"/>
</dbReference>
<dbReference type="PANTHER" id="PTHR23382">
    <property type="entry name" value="MALATE DEHYDROGENASE"/>
    <property type="match status" value="1"/>
</dbReference>
<dbReference type="Pfam" id="PF02866">
    <property type="entry name" value="Ldh_1_C"/>
    <property type="match status" value="1"/>
</dbReference>
<dbReference type="Pfam" id="PF00056">
    <property type="entry name" value="Ldh_1_N"/>
    <property type="match status" value="1"/>
</dbReference>
<dbReference type="PIRSF" id="PIRSF000102">
    <property type="entry name" value="Lac_mal_DH"/>
    <property type="match status" value="1"/>
</dbReference>
<dbReference type="SUPFAM" id="SSF56327">
    <property type="entry name" value="LDH C-terminal domain-like"/>
    <property type="match status" value="1"/>
</dbReference>
<dbReference type="SUPFAM" id="SSF51735">
    <property type="entry name" value="NAD(P)-binding Rossmann-fold domains"/>
    <property type="match status" value="1"/>
</dbReference>
<dbReference type="PROSITE" id="PS00068">
    <property type="entry name" value="MDH"/>
    <property type="match status" value="1"/>
</dbReference>
<organism>
    <name type="scientific">Mycobacterium tuberculosis (strain ATCC 25618 / H37Rv)</name>
    <dbReference type="NCBI Taxonomy" id="83332"/>
    <lineage>
        <taxon>Bacteria</taxon>
        <taxon>Bacillati</taxon>
        <taxon>Actinomycetota</taxon>
        <taxon>Actinomycetes</taxon>
        <taxon>Mycobacteriales</taxon>
        <taxon>Mycobacteriaceae</taxon>
        <taxon>Mycobacterium</taxon>
        <taxon>Mycobacterium tuberculosis complex</taxon>
    </lineage>
</organism>
<sequence length="329" mass="34322">MSASPLKVAVTGAAGQIGYSLLFRLASGSLLGPDRPIELRLLEIEPALQALEGVVMELDDCAFPLLSGVEIGSDPQKIFDGVSLALLVGARPRGAGMERSDLLEANGAIFTAQGKALNAVAADDVRVGVTGNPANTNALIAMTNAPDIPRERFSALTRLDHNRAISQLAAKTGAAVTDIKKMTIWGNHSATQYPDLFHAEVAGKNAAEVVNDQAWIEDEFIPTVAKRGAAIIDARGASSAASAASATIDAARDWLLGTPADDWVSMAVVSDGSYGVPEGLISSFPVTTKGGNWTIVSGLEIDEFSRGRIDKSTAELADERSAVTELGLI</sequence>
<comment type="function">
    <text evidence="1">Catalyzes the reversible oxidation of malate to oxaloacetate.</text>
</comment>
<comment type="catalytic activity">
    <reaction evidence="1">
        <text>(S)-malate + NAD(+) = oxaloacetate + NADH + H(+)</text>
        <dbReference type="Rhea" id="RHEA:21432"/>
        <dbReference type="ChEBI" id="CHEBI:15378"/>
        <dbReference type="ChEBI" id="CHEBI:15589"/>
        <dbReference type="ChEBI" id="CHEBI:16452"/>
        <dbReference type="ChEBI" id="CHEBI:57540"/>
        <dbReference type="ChEBI" id="CHEBI:57945"/>
        <dbReference type="EC" id="1.1.1.37"/>
    </reaction>
</comment>
<comment type="similarity">
    <text evidence="1">Belongs to the LDH/MDH superfamily. MDH type 2 family.</text>
</comment>
<protein>
    <recommendedName>
        <fullName evidence="1">Malate dehydrogenase</fullName>
        <ecNumber evidence="1">1.1.1.37</ecNumber>
    </recommendedName>
</protein>
<keyword id="KW-0002">3D-structure</keyword>
<keyword id="KW-0520">NAD</keyword>
<keyword id="KW-0560">Oxidoreductase</keyword>
<keyword id="KW-1185">Reference proteome</keyword>
<keyword id="KW-0816">Tricarboxylic acid cycle</keyword>
<name>MDH_MYCTU</name>
<feature type="chain" id="PRO_0000113380" description="Malate dehydrogenase">
    <location>
        <begin position="1"/>
        <end position="329"/>
    </location>
</feature>
<feature type="active site" description="Proton acceptor" evidence="1">
    <location>
        <position position="188"/>
    </location>
</feature>
<feature type="binding site" evidence="1">
    <location>
        <begin position="12"/>
        <end position="18"/>
    </location>
    <ligand>
        <name>NAD(+)</name>
        <dbReference type="ChEBI" id="CHEBI:57540"/>
    </ligand>
</feature>
<feature type="binding site" evidence="1">
    <location>
        <position position="93"/>
    </location>
    <ligand>
        <name>substrate</name>
    </ligand>
</feature>
<feature type="binding site" evidence="1">
    <location>
        <position position="99"/>
    </location>
    <ligand>
        <name>substrate</name>
    </ligand>
</feature>
<feature type="binding site" evidence="1">
    <location>
        <position position="106"/>
    </location>
    <ligand>
        <name>NAD(+)</name>
        <dbReference type="ChEBI" id="CHEBI:57540"/>
    </ligand>
</feature>
<feature type="binding site" evidence="1">
    <location>
        <position position="113"/>
    </location>
    <ligand>
        <name>NAD(+)</name>
        <dbReference type="ChEBI" id="CHEBI:57540"/>
    </ligand>
</feature>
<feature type="binding site" evidence="1">
    <location>
        <begin position="130"/>
        <end position="132"/>
    </location>
    <ligand>
        <name>NAD(+)</name>
        <dbReference type="ChEBI" id="CHEBI:57540"/>
    </ligand>
</feature>
<feature type="binding site" evidence="1">
    <location>
        <position position="132"/>
    </location>
    <ligand>
        <name>substrate</name>
    </ligand>
</feature>
<feature type="binding site" evidence="1">
    <location>
        <position position="163"/>
    </location>
    <ligand>
        <name>substrate</name>
    </ligand>
</feature>
<feature type="strand" evidence="2">
    <location>
        <begin position="6"/>
        <end position="12"/>
    </location>
</feature>
<feature type="helix" evidence="2">
    <location>
        <begin position="16"/>
        <end position="27"/>
    </location>
</feature>
<feature type="turn" evidence="2">
    <location>
        <begin position="28"/>
        <end position="31"/>
    </location>
</feature>
<feature type="strand" evidence="2">
    <location>
        <begin position="37"/>
        <end position="42"/>
    </location>
</feature>
<feature type="helix" evidence="2">
    <location>
        <begin position="45"/>
        <end position="47"/>
    </location>
</feature>
<feature type="helix" evidence="2">
    <location>
        <begin position="48"/>
        <end position="59"/>
    </location>
</feature>
<feature type="turn" evidence="2">
    <location>
        <begin position="60"/>
        <end position="62"/>
    </location>
</feature>
<feature type="strand" evidence="2">
    <location>
        <begin position="66"/>
        <end position="73"/>
    </location>
</feature>
<feature type="helix" evidence="2">
    <location>
        <begin position="75"/>
        <end position="78"/>
    </location>
</feature>
<feature type="turn" evidence="2">
    <location>
        <begin position="79"/>
        <end position="81"/>
    </location>
</feature>
<feature type="strand" evidence="2">
    <location>
        <begin position="83"/>
        <end position="87"/>
    </location>
</feature>
<feature type="helix" evidence="2">
    <location>
        <begin position="99"/>
        <end position="102"/>
    </location>
</feature>
<feature type="helix" evidence="2">
    <location>
        <begin position="103"/>
        <end position="120"/>
    </location>
</feature>
<feature type="strand" evidence="2">
    <location>
        <begin position="126"/>
        <end position="129"/>
    </location>
</feature>
<feature type="strand" evidence="2">
    <location>
        <begin position="131"/>
        <end position="133"/>
    </location>
</feature>
<feature type="helix" evidence="2">
    <location>
        <begin position="134"/>
        <end position="143"/>
    </location>
</feature>
<feature type="helix" evidence="2">
    <location>
        <begin position="150"/>
        <end position="152"/>
    </location>
</feature>
<feature type="strand" evidence="2">
    <location>
        <begin position="153"/>
        <end position="155"/>
    </location>
</feature>
<feature type="helix" evidence="2">
    <location>
        <begin position="158"/>
        <end position="172"/>
    </location>
</feature>
<feature type="helix" evidence="2">
    <location>
        <begin position="176"/>
        <end position="178"/>
    </location>
</feature>
<feature type="strand" evidence="2">
    <location>
        <begin position="183"/>
        <end position="186"/>
    </location>
</feature>
<feature type="strand" evidence="2">
    <location>
        <begin position="193"/>
        <end position="195"/>
    </location>
</feature>
<feature type="strand" evidence="3">
    <location>
        <begin position="200"/>
        <end position="205"/>
    </location>
</feature>
<feature type="helix" evidence="2">
    <location>
        <begin position="206"/>
        <end position="210"/>
    </location>
</feature>
<feature type="helix" evidence="2">
    <location>
        <begin position="213"/>
        <end position="218"/>
    </location>
</feature>
<feature type="helix" evidence="2">
    <location>
        <begin position="220"/>
        <end position="225"/>
    </location>
</feature>
<feature type="helix" evidence="2">
    <location>
        <begin position="227"/>
        <end position="235"/>
    </location>
</feature>
<feature type="helix" evidence="2">
    <location>
        <begin position="241"/>
        <end position="256"/>
    </location>
</feature>
<feature type="strand" evidence="2">
    <location>
        <begin position="264"/>
        <end position="269"/>
    </location>
</feature>
<feature type="helix" evidence="2">
    <location>
        <begin position="273"/>
        <end position="275"/>
    </location>
</feature>
<feature type="strand" evidence="2">
    <location>
        <begin position="281"/>
        <end position="289"/>
    </location>
</feature>
<feature type="strand" evidence="2">
    <location>
        <begin position="292"/>
        <end position="295"/>
    </location>
</feature>
<feature type="helix" evidence="2">
    <location>
        <begin position="303"/>
        <end position="325"/>
    </location>
</feature>
<proteinExistence type="evidence at protein level"/>
<evidence type="ECO:0000255" key="1">
    <source>
        <dbReference type="HAMAP-Rule" id="MF_01517"/>
    </source>
</evidence>
<evidence type="ECO:0007829" key="2">
    <source>
        <dbReference type="PDB" id="4TVO"/>
    </source>
</evidence>
<evidence type="ECO:0007829" key="3">
    <source>
        <dbReference type="PDB" id="5KVV"/>
    </source>
</evidence>
<gene>
    <name evidence="1" type="primary">mdh</name>
    <name type="ordered locus">Rv1240</name>
    <name type="ORF">MTV006.12</name>
</gene>